<sequence length="692" mass="76625">MSRLSPLDKYRNIGIMAHIDAGKTTTTERILYYTGVSHKIGEVHEGTATMDWMEQEQERGITITSAATTCEWNDHRINIIDTPGHVDFTIEVERSLRVLDGAVAVFCSVGGVEPQSETVWRQADKYRVPRIAFINKMDRIGADFFRGVQMIKDRLKANPVPLQLPVGKEDYFKGIVDLVRMKAIIWDEESLGAKFHEEEIPADLLDEAKEWRDKLIEEISSHDDALMEKYLGGEELTEAEIMAAIRSCTINIQIIPVVCGSSFKNKGVQNLLDAVVDYMPSPLDIPAIKGIDESGAEVERKADDTEPFSALGFKIMTDPFVGQLTFIRVYSGVLQSGSYVYNATKGKRERIGRLLKMHANKREEIKEVYAGDIAAAVGLKYTTTGDTLCNEDQAVILESIEFPEPVISIAIEPKTKSDQEKLGLSLQKLASEDPSFRVKTDEETGQTIISGMGELHLEIIVDRMMREFKVEANVGKPQVAYRETITKKVKVEGKFVRQSGGRGQYGHVWLEVEPQPEPGKGYEFVDAIKGGVVPREYIPAVDKGIQEATDNGVLAGFPVVDVKVTLIDGSYHEVDSSEMAFKIAGSMGFKEGCQKAGPILLEPIMSVEVVVPEEYMGEVIGDLNSRRGRIMGMDSRAGAQVVSSMVPLANMFGYSTDLRSATQGRATYAMTFDHYEPVPKSVSDEIIAKVKG</sequence>
<accession>B3E7T2</accession>
<protein>
    <recommendedName>
        <fullName evidence="1">Elongation factor G</fullName>
        <shortName evidence="1">EF-G</shortName>
    </recommendedName>
</protein>
<organism>
    <name type="scientific">Trichlorobacter lovleyi (strain ATCC BAA-1151 / DSM 17278 / SZ)</name>
    <name type="common">Geobacter lovleyi</name>
    <dbReference type="NCBI Taxonomy" id="398767"/>
    <lineage>
        <taxon>Bacteria</taxon>
        <taxon>Pseudomonadati</taxon>
        <taxon>Thermodesulfobacteriota</taxon>
        <taxon>Desulfuromonadia</taxon>
        <taxon>Geobacterales</taxon>
        <taxon>Geobacteraceae</taxon>
        <taxon>Trichlorobacter</taxon>
    </lineage>
</organism>
<gene>
    <name evidence="1" type="primary">fusA</name>
    <name type="ordered locus">Glov_1343</name>
</gene>
<keyword id="KW-0963">Cytoplasm</keyword>
<keyword id="KW-0251">Elongation factor</keyword>
<keyword id="KW-0342">GTP-binding</keyword>
<keyword id="KW-0547">Nucleotide-binding</keyword>
<keyword id="KW-0648">Protein biosynthesis</keyword>
<keyword id="KW-1185">Reference proteome</keyword>
<proteinExistence type="inferred from homology"/>
<reference key="1">
    <citation type="submission" date="2008-05" db="EMBL/GenBank/DDBJ databases">
        <title>Complete sequence of chromosome of Geobacter lovleyi SZ.</title>
        <authorList>
            <consortium name="US DOE Joint Genome Institute"/>
            <person name="Lucas S."/>
            <person name="Copeland A."/>
            <person name="Lapidus A."/>
            <person name="Glavina del Rio T."/>
            <person name="Dalin E."/>
            <person name="Tice H."/>
            <person name="Bruce D."/>
            <person name="Goodwin L."/>
            <person name="Pitluck S."/>
            <person name="Chertkov O."/>
            <person name="Meincke L."/>
            <person name="Brettin T."/>
            <person name="Detter J.C."/>
            <person name="Han C."/>
            <person name="Tapia R."/>
            <person name="Kuske C.R."/>
            <person name="Schmutz J."/>
            <person name="Larimer F."/>
            <person name="Land M."/>
            <person name="Hauser L."/>
            <person name="Kyrpides N."/>
            <person name="Mikhailova N."/>
            <person name="Sung Y."/>
            <person name="Fletcher K.E."/>
            <person name="Ritalahti K.M."/>
            <person name="Loeffler F.E."/>
            <person name="Richardson P."/>
        </authorList>
    </citation>
    <scope>NUCLEOTIDE SEQUENCE [LARGE SCALE GENOMIC DNA]</scope>
    <source>
        <strain>ATCC BAA-1151 / DSM 17278 / SZ</strain>
    </source>
</reference>
<feature type="chain" id="PRO_1000091716" description="Elongation factor G">
    <location>
        <begin position="1"/>
        <end position="692"/>
    </location>
</feature>
<feature type="domain" description="tr-type G">
    <location>
        <begin position="8"/>
        <end position="283"/>
    </location>
</feature>
<feature type="binding site" evidence="1">
    <location>
        <begin position="17"/>
        <end position="24"/>
    </location>
    <ligand>
        <name>GTP</name>
        <dbReference type="ChEBI" id="CHEBI:37565"/>
    </ligand>
</feature>
<feature type="binding site" evidence="1">
    <location>
        <begin position="81"/>
        <end position="85"/>
    </location>
    <ligand>
        <name>GTP</name>
        <dbReference type="ChEBI" id="CHEBI:37565"/>
    </ligand>
</feature>
<feature type="binding site" evidence="1">
    <location>
        <begin position="135"/>
        <end position="138"/>
    </location>
    <ligand>
        <name>GTP</name>
        <dbReference type="ChEBI" id="CHEBI:37565"/>
    </ligand>
</feature>
<name>EFG_TRIL1</name>
<evidence type="ECO:0000255" key="1">
    <source>
        <dbReference type="HAMAP-Rule" id="MF_00054"/>
    </source>
</evidence>
<comment type="function">
    <text evidence="1">Catalyzes the GTP-dependent ribosomal translocation step during translation elongation. During this step, the ribosome changes from the pre-translocational (PRE) to the post-translocational (POST) state as the newly formed A-site-bound peptidyl-tRNA and P-site-bound deacylated tRNA move to the P and E sites, respectively. Catalyzes the coordinated movement of the two tRNA molecules, the mRNA and conformational changes in the ribosome.</text>
</comment>
<comment type="subcellular location">
    <subcellularLocation>
        <location evidence="1">Cytoplasm</location>
    </subcellularLocation>
</comment>
<comment type="similarity">
    <text evidence="1">Belongs to the TRAFAC class translation factor GTPase superfamily. Classic translation factor GTPase family. EF-G/EF-2 subfamily.</text>
</comment>
<dbReference type="EMBL" id="CP001089">
    <property type="protein sequence ID" value="ACD95064.1"/>
    <property type="molecule type" value="Genomic_DNA"/>
</dbReference>
<dbReference type="RefSeq" id="WP_012469410.1">
    <property type="nucleotide sequence ID" value="NC_010814.1"/>
</dbReference>
<dbReference type="SMR" id="B3E7T2"/>
<dbReference type="STRING" id="398767.Glov_1343"/>
<dbReference type="KEGG" id="glo:Glov_1343"/>
<dbReference type="eggNOG" id="COG0480">
    <property type="taxonomic scope" value="Bacteria"/>
</dbReference>
<dbReference type="HOGENOM" id="CLU_002794_4_1_7"/>
<dbReference type="OrthoDB" id="9801591at2"/>
<dbReference type="Proteomes" id="UP000002420">
    <property type="component" value="Chromosome"/>
</dbReference>
<dbReference type="GO" id="GO:0005737">
    <property type="term" value="C:cytoplasm"/>
    <property type="evidence" value="ECO:0007669"/>
    <property type="project" value="UniProtKB-SubCell"/>
</dbReference>
<dbReference type="GO" id="GO:0005525">
    <property type="term" value="F:GTP binding"/>
    <property type="evidence" value="ECO:0007669"/>
    <property type="project" value="UniProtKB-UniRule"/>
</dbReference>
<dbReference type="GO" id="GO:0003924">
    <property type="term" value="F:GTPase activity"/>
    <property type="evidence" value="ECO:0007669"/>
    <property type="project" value="InterPro"/>
</dbReference>
<dbReference type="GO" id="GO:0003746">
    <property type="term" value="F:translation elongation factor activity"/>
    <property type="evidence" value="ECO:0007669"/>
    <property type="project" value="UniProtKB-UniRule"/>
</dbReference>
<dbReference type="GO" id="GO:0032790">
    <property type="term" value="P:ribosome disassembly"/>
    <property type="evidence" value="ECO:0007669"/>
    <property type="project" value="TreeGrafter"/>
</dbReference>
<dbReference type="CDD" id="cd01886">
    <property type="entry name" value="EF-G"/>
    <property type="match status" value="1"/>
</dbReference>
<dbReference type="CDD" id="cd16262">
    <property type="entry name" value="EFG_III"/>
    <property type="match status" value="1"/>
</dbReference>
<dbReference type="CDD" id="cd01434">
    <property type="entry name" value="EFG_mtEFG1_IV"/>
    <property type="match status" value="1"/>
</dbReference>
<dbReference type="CDD" id="cd03713">
    <property type="entry name" value="EFG_mtEFG_C"/>
    <property type="match status" value="1"/>
</dbReference>
<dbReference type="CDD" id="cd04088">
    <property type="entry name" value="EFG_mtEFG_II"/>
    <property type="match status" value="1"/>
</dbReference>
<dbReference type="FunFam" id="2.40.30.10:FF:000006">
    <property type="entry name" value="Elongation factor G"/>
    <property type="match status" value="1"/>
</dbReference>
<dbReference type="FunFam" id="3.30.230.10:FF:000003">
    <property type="entry name" value="Elongation factor G"/>
    <property type="match status" value="1"/>
</dbReference>
<dbReference type="FunFam" id="3.30.70.240:FF:000001">
    <property type="entry name" value="Elongation factor G"/>
    <property type="match status" value="1"/>
</dbReference>
<dbReference type="FunFam" id="3.30.70.870:FF:000001">
    <property type="entry name" value="Elongation factor G"/>
    <property type="match status" value="1"/>
</dbReference>
<dbReference type="FunFam" id="3.40.50.300:FF:000029">
    <property type="entry name" value="Elongation factor G"/>
    <property type="match status" value="1"/>
</dbReference>
<dbReference type="Gene3D" id="3.30.230.10">
    <property type="match status" value="1"/>
</dbReference>
<dbReference type="Gene3D" id="3.30.70.240">
    <property type="match status" value="1"/>
</dbReference>
<dbReference type="Gene3D" id="3.30.70.870">
    <property type="entry name" value="Elongation Factor G (Translational Gtpase), domain 3"/>
    <property type="match status" value="1"/>
</dbReference>
<dbReference type="Gene3D" id="3.40.50.300">
    <property type="entry name" value="P-loop containing nucleotide triphosphate hydrolases"/>
    <property type="match status" value="1"/>
</dbReference>
<dbReference type="Gene3D" id="2.40.30.10">
    <property type="entry name" value="Translation factors"/>
    <property type="match status" value="1"/>
</dbReference>
<dbReference type="HAMAP" id="MF_00054_B">
    <property type="entry name" value="EF_G_EF_2_B"/>
    <property type="match status" value="1"/>
</dbReference>
<dbReference type="InterPro" id="IPR041095">
    <property type="entry name" value="EFG_II"/>
</dbReference>
<dbReference type="InterPro" id="IPR009022">
    <property type="entry name" value="EFG_III"/>
</dbReference>
<dbReference type="InterPro" id="IPR035647">
    <property type="entry name" value="EFG_III/V"/>
</dbReference>
<dbReference type="InterPro" id="IPR047872">
    <property type="entry name" value="EFG_IV"/>
</dbReference>
<dbReference type="InterPro" id="IPR035649">
    <property type="entry name" value="EFG_V"/>
</dbReference>
<dbReference type="InterPro" id="IPR000640">
    <property type="entry name" value="EFG_V-like"/>
</dbReference>
<dbReference type="InterPro" id="IPR004161">
    <property type="entry name" value="EFTu-like_2"/>
</dbReference>
<dbReference type="InterPro" id="IPR031157">
    <property type="entry name" value="G_TR_CS"/>
</dbReference>
<dbReference type="InterPro" id="IPR027417">
    <property type="entry name" value="P-loop_NTPase"/>
</dbReference>
<dbReference type="InterPro" id="IPR020568">
    <property type="entry name" value="Ribosomal_Su5_D2-typ_SF"/>
</dbReference>
<dbReference type="InterPro" id="IPR014721">
    <property type="entry name" value="Ribsml_uS5_D2-typ_fold_subgr"/>
</dbReference>
<dbReference type="InterPro" id="IPR005225">
    <property type="entry name" value="Small_GTP-bd"/>
</dbReference>
<dbReference type="InterPro" id="IPR000795">
    <property type="entry name" value="T_Tr_GTP-bd_dom"/>
</dbReference>
<dbReference type="InterPro" id="IPR009000">
    <property type="entry name" value="Transl_B-barrel_sf"/>
</dbReference>
<dbReference type="InterPro" id="IPR004540">
    <property type="entry name" value="Transl_elong_EFG/EF2"/>
</dbReference>
<dbReference type="InterPro" id="IPR005517">
    <property type="entry name" value="Transl_elong_EFG/EF2_IV"/>
</dbReference>
<dbReference type="NCBIfam" id="TIGR00484">
    <property type="entry name" value="EF-G"/>
    <property type="match status" value="1"/>
</dbReference>
<dbReference type="NCBIfam" id="NF009379">
    <property type="entry name" value="PRK12740.1-3"/>
    <property type="match status" value="1"/>
</dbReference>
<dbReference type="NCBIfam" id="NF009381">
    <property type="entry name" value="PRK12740.1-5"/>
    <property type="match status" value="1"/>
</dbReference>
<dbReference type="NCBIfam" id="NF009891">
    <property type="entry name" value="PRK13351.1-1"/>
    <property type="match status" value="1"/>
</dbReference>
<dbReference type="NCBIfam" id="TIGR00231">
    <property type="entry name" value="small_GTP"/>
    <property type="match status" value="1"/>
</dbReference>
<dbReference type="PANTHER" id="PTHR43261:SF1">
    <property type="entry name" value="RIBOSOME-RELEASING FACTOR 2, MITOCHONDRIAL"/>
    <property type="match status" value="1"/>
</dbReference>
<dbReference type="PANTHER" id="PTHR43261">
    <property type="entry name" value="TRANSLATION ELONGATION FACTOR G-RELATED"/>
    <property type="match status" value="1"/>
</dbReference>
<dbReference type="Pfam" id="PF00679">
    <property type="entry name" value="EFG_C"/>
    <property type="match status" value="1"/>
</dbReference>
<dbReference type="Pfam" id="PF14492">
    <property type="entry name" value="EFG_III"/>
    <property type="match status" value="1"/>
</dbReference>
<dbReference type="Pfam" id="PF03764">
    <property type="entry name" value="EFG_IV"/>
    <property type="match status" value="1"/>
</dbReference>
<dbReference type="Pfam" id="PF00009">
    <property type="entry name" value="GTP_EFTU"/>
    <property type="match status" value="1"/>
</dbReference>
<dbReference type="Pfam" id="PF03144">
    <property type="entry name" value="GTP_EFTU_D2"/>
    <property type="match status" value="1"/>
</dbReference>
<dbReference type="PRINTS" id="PR00315">
    <property type="entry name" value="ELONGATNFCT"/>
</dbReference>
<dbReference type="SMART" id="SM00838">
    <property type="entry name" value="EFG_C"/>
    <property type="match status" value="1"/>
</dbReference>
<dbReference type="SMART" id="SM00889">
    <property type="entry name" value="EFG_IV"/>
    <property type="match status" value="1"/>
</dbReference>
<dbReference type="SUPFAM" id="SSF54980">
    <property type="entry name" value="EF-G C-terminal domain-like"/>
    <property type="match status" value="2"/>
</dbReference>
<dbReference type="SUPFAM" id="SSF52540">
    <property type="entry name" value="P-loop containing nucleoside triphosphate hydrolases"/>
    <property type="match status" value="1"/>
</dbReference>
<dbReference type="SUPFAM" id="SSF54211">
    <property type="entry name" value="Ribosomal protein S5 domain 2-like"/>
    <property type="match status" value="1"/>
</dbReference>
<dbReference type="SUPFAM" id="SSF50447">
    <property type="entry name" value="Translation proteins"/>
    <property type="match status" value="1"/>
</dbReference>
<dbReference type="PROSITE" id="PS00301">
    <property type="entry name" value="G_TR_1"/>
    <property type="match status" value="1"/>
</dbReference>
<dbReference type="PROSITE" id="PS51722">
    <property type="entry name" value="G_TR_2"/>
    <property type="match status" value="1"/>
</dbReference>